<organism>
    <name type="scientific">Aspergillus terreus (strain NIH 2624 / FGSC A1156)</name>
    <dbReference type="NCBI Taxonomy" id="341663"/>
    <lineage>
        <taxon>Eukaryota</taxon>
        <taxon>Fungi</taxon>
        <taxon>Dikarya</taxon>
        <taxon>Ascomycota</taxon>
        <taxon>Pezizomycotina</taxon>
        <taxon>Eurotiomycetes</taxon>
        <taxon>Eurotiomycetidae</taxon>
        <taxon>Eurotiales</taxon>
        <taxon>Aspergillaceae</taxon>
        <taxon>Aspergillus</taxon>
        <taxon>Aspergillus subgen. Circumdati</taxon>
    </lineage>
</organism>
<name>TRT2_ASPTN</name>
<dbReference type="EC" id="2.5.1.-" evidence="3 4"/>
<dbReference type="EMBL" id="CH476609">
    <property type="protein sequence ID" value="EAU29527.1"/>
    <property type="molecule type" value="Genomic_DNA"/>
</dbReference>
<dbReference type="RefSeq" id="XP_001209380.1">
    <property type="nucleotide sequence ID" value="XM_001209380.1"/>
</dbReference>
<dbReference type="SMR" id="Q0C8A6"/>
<dbReference type="STRING" id="341663.Q0C8A6"/>
<dbReference type="EnsemblFungi" id="EAU29527">
    <property type="protein sequence ID" value="EAU29527"/>
    <property type="gene ID" value="ATEG_10078"/>
</dbReference>
<dbReference type="GeneID" id="4319421"/>
<dbReference type="VEuPathDB" id="FungiDB:ATEG_10078"/>
<dbReference type="eggNOG" id="KOG1381">
    <property type="taxonomic scope" value="Eukaryota"/>
</dbReference>
<dbReference type="HOGENOM" id="CLU_034879_2_0_1"/>
<dbReference type="OMA" id="FGTWIRP"/>
<dbReference type="OrthoDB" id="18170at2759"/>
<dbReference type="UniPathway" id="UPA00213"/>
<dbReference type="Proteomes" id="UP000007963">
    <property type="component" value="Unassembled WGS sequence"/>
</dbReference>
<dbReference type="GO" id="GO:0005743">
    <property type="term" value="C:mitochondrial inner membrane"/>
    <property type="evidence" value="ECO:0007669"/>
    <property type="project" value="TreeGrafter"/>
</dbReference>
<dbReference type="GO" id="GO:0008412">
    <property type="term" value="F:4-hydroxybenzoate polyprenyltransferase activity"/>
    <property type="evidence" value="ECO:0007669"/>
    <property type="project" value="TreeGrafter"/>
</dbReference>
<dbReference type="GO" id="GO:0016114">
    <property type="term" value="P:terpenoid biosynthetic process"/>
    <property type="evidence" value="ECO:0007669"/>
    <property type="project" value="UniProtKB-UniPathway"/>
</dbReference>
<dbReference type="GO" id="GO:0006744">
    <property type="term" value="P:ubiquinone biosynthetic process"/>
    <property type="evidence" value="ECO:0007669"/>
    <property type="project" value="TreeGrafter"/>
</dbReference>
<dbReference type="CDD" id="cd13959">
    <property type="entry name" value="PT_UbiA_COQ2"/>
    <property type="match status" value="1"/>
</dbReference>
<dbReference type="FunFam" id="1.10.357.140:FF:000008">
    <property type="entry name" value="4-hydroxybenzoate octaprenyltransferase"/>
    <property type="match status" value="1"/>
</dbReference>
<dbReference type="Gene3D" id="1.10.357.140">
    <property type="entry name" value="UbiA prenyltransferase"/>
    <property type="match status" value="1"/>
</dbReference>
<dbReference type="Gene3D" id="1.20.120.1780">
    <property type="entry name" value="UbiA prenyltransferase"/>
    <property type="match status" value="1"/>
</dbReference>
<dbReference type="InterPro" id="IPR039653">
    <property type="entry name" value="Prenyltransferase"/>
</dbReference>
<dbReference type="InterPro" id="IPR000537">
    <property type="entry name" value="UbiA_prenyltransferase"/>
</dbReference>
<dbReference type="InterPro" id="IPR030470">
    <property type="entry name" value="UbiA_prenylTrfase_CS"/>
</dbReference>
<dbReference type="InterPro" id="IPR044878">
    <property type="entry name" value="UbiA_sf"/>
</dbReference>
<dbReference type="PANTHER" id="PTHR11048:SF39">
    <property type="entry name" value="POLYPRENYL TRANSFERASE AUSN"/>
    <property type="match status" value="1"/>
</dbReference>
<dbReference type="PANTHER" id="PTHR11048">
    <property type="entry name" value="PRENYLTRANSFERASES"/>
    <property type="match status" value="1"/>
</dbReference>
<dbReference type="Pfam" id="PF01040">
    <property type="entry name" value="UbiA"/>
    <property type="match status" value="1"/>
</dbReference>
<dbReference type="PROSITE" id="PS00943">
    <property type="entry name" value="UBIA"/>
    <property type="match status" value="1"/>
</dbReference>
<proteinExistence type="evidence at protein level"/>
<reference key="1">
    <citation type="submission" date="2005-09" db="EMBL/GenBank/DDBJ databases">
        <title>Annotation of the Aspergillus terreus NIH2624 genome.</title>
        <authorList>
            <person name="Birren B.W."/>
            <person name="Lander E.S."/>
            <person name="Galagan J.E."/>
            <person name="Nusbaum C."/>
            <person name="Devon K."/>
            <person name="Henn M."/>
            <person name="Ma L.-J."/>
            <person name="Jaffe D.B."/>
            <person name="Butler J."/>
            <person name="Alvarez P."/>
            <person name="Gnerre S."/>
            <person name="Grabherr M."/>
            <person name="Kleber M."/>
            <person name="Mauceli E.W."/>
            <person name="Brockman W."/>
            <person name="Rounsley S."/>
            <person name="Young S.K."/>
            <person name="LaButti K."/>
            <person name="Pushparaj V."/>
            <person name="DeCaprio D."/>
            <person name="Crawford M."/>
            <person name="Koehrsen M."/>
            <person name="Engels R."/>
            <person name="Montgomery P."/>
            <person name="Pearson M."/>
            <person name="Howarth C."/>
            <person name="Larson L."/>
            <person name="Luoma S."/>
            <person name="White J."/>
            <person name="Alvarado L."/>
            <person name="Kodira C.D."/>
            <person name="Zeng Q."/>
            <person name="Oleary S."/>
            <person name="Yandava C."/>
            <person name="Denning D.W."/>
            <person name="Nierman W.C."/>
            <person name="Milne T."/>
            <person name="Madden K."/>
        </authorList>
    </citation>
    <scope>NUCLEOTIDE SEQUENCE [LARGE SCALE GENOMIC DNA]</scope>
    <source>
        <strain>NIH 2624 / FGSC A1156</strain>
    </source>
</reference>
<reference key="2">
    <citation type="journal article" date="2012" name="ChemBioChem">
        <title>Identification of a key prenyltransferase involved in biosynthesis of the most abundant fungal meroterpenoids derived from 3,5-dimethylorsellinic acid.</title>
        <authorList>
            <person name="Itoh T."/>
            <person name="Tokunaga K."/>
            <person name="Radhakrishnan E.K."/>
            <person name="Fujii I."/>
            <person name="Abe I."/>
            <person name="Ebizuka Y."/>
            <person name="Kushiro T."/>
        </authorList>
    </citation>
    <scope>FUNCTION</scope>
    <scope>CATALYTIC ACTIVITY</scope>
</reference>
<reference key="3">
    <citation type="journal article" date="2012" name="ChemBioChem">
        <title>Terretonin biosynthesis requires methylation as essential step for cyclization.</title>
        <authorList>
            <person name="Matsuda Y."/>
            <person name="Awakawa T."/>
            <person name="Itoh T."/>
            <person name="Wakimoto T."/>
            <person name="Kushiro T."/>
            <person name="Fujii I."/>
            <person name="Ebizuka Y."/>
            <person name="Abe I."/>
        </authorList>
    </citation>
    <scope>FUNCTION</scope>
    <scope>CATALYTIC ACTIVITY</scope>
</reference>
<reference key="4">
    <citation type="journal article" date="2012" name="Org. Lett.">
        <title>Molecular genetic characterization of a cluster in A. terreus for biosynthesis of the meroterpenoid terretonin.</title>
        <authorList>
            <person name="Guo C.J."/>
            <person name="Knox B.P."/>
            <person name="Chiang Y.M."/>
            <person name="Lo H.C."/>
            <person name="Sanchez J.F."/>
            <person name="Lee K.H."/>
            <person name="Oakley B.R."/>
            <person name="Bruno K.S."/>
            <person name="Wang C.C."/>
        </authorList>
    </citation>
    <scope>FUNCTION</scope>
    <scope>DISRUPTION PHENOTYPE</scope>
</reference>
<reference key="5">
    <citation type="journal article" date="2015" name="J. Am. Chem. Soc.">
        <title>Uncovering the unusual D-ring construction in terretonin biosynthesis by collaboration of a multifunctional cytochrome P450 and a unique isomerase.</title>
        <authorList>
            <person name="Matsuda Y."/>
            <person name="Iwabuchi T."/>
            <person name="Wakimoto T."/>
            <person name="Awakawa T."/>
            <person name="Abe I."/>
        </authorList>
    </citation>
    <scope>FUNCTION</scope>
</reference>
<reference key="6">
    <citation type="journal article" date="2017" name="Nat. Chem. Biol.">
        <title>Molecular basis for the unusual ring reconstruction in fungal meroterpenoid biogenesis.</title>
        <authorList>
            <person name="Mori T."/>
            <person name="Iwabuchi T."/>
            <person name="Hoshino S."/>
            <person name="Wang H."/>
            <person name="Matsuda Y."/>
            <person name="Abe I."/>
        </authorList>
    </citation>
    <scope>FUNCTION</scope>
</reference>
<keyword id="KW-0460">Magnesium</keyword>
<keyword id="KW-0472">Membrane</keyword>
<keyword id="KW-1185">Reference proteome</keyword>
<keyword id="KW-0808">Transferase</keyword>
<keyword id="KW-0812">Transmembrane</keyword>
<keyword id="KW-1133">Transmembrane helix</keyword>
<comment type="function">
    <text evidence="3 4 5 6 7">Polyprenyl transferase; part of the gene cluster that mediates the biosynthesis of terretonin, a fungal meroterpenoid that acts as a mycotoxin (PubMed:22549923, PubMed:23116177, PubMed:25671343). The first step of the pathway is the synthesis of 3,5-dimethylorsellinic acid (DMOA) by the polyketide synthase trt4 (PubMed:22549923, PubMed:23116177). DMOA is then prenylated into farnesyl-DMOA by the polyprenyl transferase trt2 (PubMed:22549923, PubMed:22782788, PubMed:23116177). Methylation by the methyltransferase trt5 then leads to farnesyl-DMOA methyl ester which is further subject to epoxidation by the FAD-dependent monooxygenase trt8 to yield epoxyfarnesyl-DMOA methyl ester (PubMed:22549923, PubMed:22782788, PubMed:23116177). Cyclization of epoxyfarnesyl-DMOA methyl ester by the terpene cyclase trt1 leads to a tetracycle intermediate which is in turn converted to preterretonin (PubMed:22549923, PubMed:22782788, PubMed:23116177). Dehydrogenase trt9 comes next to transform preterretonin to preterrenoid (PubMed:22549923, PubMed:23116177). The FAD-dependent monooxygenase trt3 is then required for the C-hydroxylation at C16 of preterrenoid to yield terrenoid (PubMed:22549923, PubMed:23116177). The cytochrome P450 trt6 catalyzes three successive oxidations to transform terrenoid into an unstable intermediate, which then undergoes the D-ring expansion and unusual rearrangement of the methoxy group to afford the core skeleton of terretonin (PubMed:25671343, PubMed:28759016). Trt14 catalyzes the D-ring expansion of terretonin involving intramolecular methoxy rearrangement as well as the hydrolysis of the expanded D-ring and the methyl ester moiety (PubMed:25671343, PubMed:28759016). Finally, the nonheme iron-dependent dioxygenase trt7 accomplishes the last two oxidation reactions steps to complete the biosynthesis of terretonin (PubMed:25671343). Terretonin C is produced via spontaneous decarboxylation of the terretonin precursor (PubMed:23116177). Another shunt product of the terretonin biosynthesis is dihydrofarnesyl-DMOA, derived from epoxyfarnesyl-DMOA through hydrolysis of the epoxide (PubMed:22549923, PubMed:22782788, PubMed:23116177).</text>
</comment>
<comment type="catalytic activity">
    <reaction evidence="3 4">
        <text>3,5-dimethylorsellinate + (2E,6E)-farnesyl diphosphate = (3R)-3-farnesyl-6-hydroxy-2,3,5-trimethyl-4-oxocyclohexa-1,5-diene-1-carboxylate + diphosphate + H(+)</text>
        <dbReference type="Rhea" id="RHEA:49632"/>
        <dbReference type="ChEBI" id="CHEBI:15378"/>
        <dbReference type="ChEBI" id="CHEBI:33019"/>
        <dbReference type="ChEBI" id="CHEBI:131856"/>
        <dbReference type="ChEBI" id="CHEBI:131857"/>
        <dbReference type="ChEBI" id="CHEBI:175763"/>
    </reaction>
    <physiologicalReaction direction="left-to-right" evidence="3 4">
        <dbReference type="Rhea" id="RHEA:49633"/>
    </physiologicalReaction>
</comment>
<comment type="cofactor">
    <cofactor evidence="1">
        <name>Mg(2+)</name>
        <dbReference type="ChEBI" id="CHEBI:18420"/>
    </cofactor>
</comment>
<comment type="pathway">
    <text evidence="5">Secondary metabolite biosynthesis; terpenoid biosynthesis.</text>
</comment>
<comment type="subcellular location">
    <subcellularLocation>
        <location evidence="2">Membrane</location>
        <topology evidence="2">Multi-pass membrane protein</topology>
    </subcellularLocation>
</comment>
<comment type="disruption phenotype">
    <text evidence="5">Impairs the synthesis of terretonin but accumulates 3,5-dimethylorsellinic acid (DMOA) (PubMed:23116177).</text>
</comment>
<comment type="similarity">
    <text evidence="9">Belongs to the UbiA prenyltransferase family.</text>
</comment>
<feature type="chain" id="PRO_0000436591" description="Polyprenyl transferase trt2">
    <location>
        <begin position="1"/>
        <end position="342"/>
    </location>
</feature>
<feature type="transmembrane region" description="Helical" evidence="2">
    <location>
        <begin position="71"/>
        <end position="91"/>
    </location>
</feature>
<feature type="transmembrane region" description="Helical" evidence="2">
    <location>
        <begin position="95"/>
        <end position="115"/>
    </location>
</feature>
<feature type="transmembrane region" description="Helical" evidence="2">
    <location>
        <begin position="141"/>
        <end position="161"/>
    </location>
</feature>
<feature type="transmembrane region" description="Helical" evidence="2">
    <location>
        <begin position="163"/>
        <end position="183"/>
    </location>
</feature>
<feature type="transmembrane region" description="Helical" evidence="2">
    <location>
        <begin position="187"/>
        <end position="207"/>
    </location>
</feature>
<feature type="transmembrane region" description="Helical" evidence="2">
    <location>
        <begin position="216"/>
        <end position="236"/>
    </location>
</feature>
<feature type="transmembrane region" description="Helical" evidence="2">
    <location>
        <begin position="261"/>
        <end position="278"/>
    </location>
</feature>
<feature type="transmembrane region" description="Helical" evidence="2">
    <location>
        <begin position="282"/>
        <end position="304"/>
    </location>
</feature>
<feature type="transmembrane region" description="Helical" evidence="2">
    <location>
        <begin position="319"/>
        <end position="339"/>
    </location>
</feature>
<gene>
    <name evidence="8" type="primary">trt2</name>
    <name type="ORF">ATEG_10078</name>
</gene>
<protein>
    <recommendedName>
        <fullName evidence="10">Polyprenyl transferase trt2</fullName>
        <ecNumber evidence="3 4">2.5.1.-</ecNumber>
    </recommendedName>
    <alternativeName>
        <fullName evidence="8">Terretonin synthesis protein 2</fullName>
    </alternativeName>
</protein>
<evidence type="ECO:0000250" key="1">
    <source>
        <dbReference type="UniProtKB" id="P32378"/>
    </source>
</evidence>
<evidence type="ECO:0000255" key="2"/>
<evidence type="ECO:0000269" key="3">
    <source>
    </source>
</evidence>
<evidence type="ECO:0000269" key="4">
    <source>
    </source>
</evidence>
<evidence type="ECO:0000269" key="5">
    <source>
    </source>
</evidence>
<evidence type="ECO:0000269" key="6">
    <source>
    </source>
</evidence>
<evidence type="ECO:0000269" key="7">
    <source>
    </source>
</evidence>
<evidence type="ECO:0000303" key="8">
    <source>
    </source>
</evidence>
<evidence type="ECO:0000305" key="9"/>
<evidence type="ECO:0000305" key="10">
    <source>
    </source>
</evidence>
<sequence length="342" mass="37164">MPILAPLGPSPLSEVFTYSNLPSPVEMATGKDYRHSKAGILSKLPPSIKPYAELLRIHRPLGYYLNISPYVVGVAYTAAIAPVSLPATVLLNRLIILSLWGFLIRSGGCAWNDLIDMDIDRQVSRTKLRPLPRGAISPTSAALLTAIIFGCGGLLLLLLPSQCTVEAGIILFFALLYPFGKRFSDYPQLILVNIAWAIPMAMSSLEVDPLDFPYSTLSMCIFIASVIVMIDVVYACQDAEEDKKIGARSMAVRYSDITDQLAYGFFFSGAISLLLGGVLRGLGLPFIVFSVGGHIFGFLRFLSVTLGEGTKSASVESRAKSSCLLATVFWVLGFFLEYLARS</sequence>
<accession>Q0C8A6</accession>